<feature type="chain" id="PRO_0000151271" description="Ketol-acid reductoisomerase (NADP(+)) 2">
    <location>
        <begin position="1"/>
        <end position="335"/>
    </location>
</feature>
<feature type="domain" description="KARI N-terminal Rossmann" evidence="2">
    <location>
        <begin position="1"/>
        <end position="180"/>
    </location>
</feature>
<feature type="domain" description="KARI C-terminal knotted" evidence="3">
    <location>
        <begin position="181"/>
        <end position="326"/>
    </location>
</feature>
<feature type="active site" evidence="1">
    <location>
        <position position="106"/>
    </location>
</feature>
<feature type="binding site" evidence="1">
    <location>
        <begin position="24"/>
        <end position="27"/>
    </location>
    <ligand>
        <name>NADP(+)</name>
        <dbReference type="ChEBI" id="CHEBI:58349"/>
    </ligand>
</feature>
<feature type="binding site" evidence="1">
    <location>
        <position position="47"/>
    </location>
    <ligand>
        <name>NADP(+)</name>
        <dbReference type="ChEBI" id="CHEBI:58349"/>
    </ligand>
</feature>
<feature type="binding site" evidence="1">
    <location>
        <position position="51"/>
    </location>
    <ligand>
        <name>NADP(+)</name>
        <dbReference type="ChEBI" id="CHEBI:58349"/>
    </ligand>
</feature>
<feature type="binding site" evidence="1">
    <location>
        <begin position="81"/>
        <end position="84"/>
    </location>
    <ligand>
        <name>NADP(+)</name>
        <dbReference type="ChEBI" id="CHEBI:58349"/>
    </ligand>
</feature>
<feature type="binding site" evidence="1">
    <location>
        <position position="132"/>
    </location>
    <ligand>
        <name>NADP(+)</name>
        <dbReference type="ChEBI" id="CHEBI:58349"/>
    </ligand>
</feature>
<feature type="binding site" evidence="1">
    <location>
        <position position="189"/>
    </location>
    <ligand>
        <name>Mg(2+)</name>
        <dbReference type="ChEBI" id="CHEBI:18420"/>
        <label>1</label>
    </ligand>
</feature>
<feature type="binding site" evidence="1">
    <location>
        <position position="189"/>
    </location>
    <ligand>
        <name>Mg(2+)</name>
        <dbReference type="ChEBI" id="CHEBI:18420"/>
        <label>2</label>
    </ligand>
</feature>
<feature type="binding site" evidence="1">
    <location>
        <position position="193"/>
    </location>
    <ligand>
        <name>Mg(2+)</name>
        <dbReference type="ChEBI" id="CHEBI:18420"/>
        <label>1</label>
    </ligand>
</feature>
<feature type="binding site" evidence="1">
    <location>
        <position position="225"/>
    </location>
    <ligand>
        <name>Mg(2+)</name>
        <dbReference type="ChEBI" id="CHEBI:18420"/>
        <label>2</label>
    </ligand>
</feature>
<feature type="binding site" evidence="1">
    <location>
        <position position="229"/>
    </location>
    <ligand>
        <name>Mg(2+)</name>
        <dbReference type="ChEBI" id="CHEBI:18420"/>
        <label>2</label>
    </ligand>
</feature>
<feature type="binding site" evidence="1">
    <location>
        <position position="250"/>
    </location>
    <ligand>
        <name>substrate</name>
    </ligand>
</feature>
<feature type="helix" evidence="4">
    <location>
        <begin position="6"/>
        <end position="8"/>
    </location>
</feature>
<feature type="helix" evidence="4">
    <location>
        <begin position="11"/>
        <end position="14"/>
    </location>
</feature>
<feature type="strand" evidence="4">
    <location>
        <begin position="19"/>
        <end position="22"/>
    </location>
</feature>
<feature type="helix" evidence="4">
    <location>
        <begin position="28"/>
        <end position="37"/>
    </location>
</feature>
<feature type="strand" evidence="4">
    <location>
        <begin position="42"/>
        <end position="45"/>
    </location>
</feature>
<feature type="helix" evidence="4">
    <location>
        <begin position="50"/>
        <end position="57"/>
    </location>
</feature>
<feature type="helix" evidence="4">
    <location>
        <begin position="65"/>
        <end position="70"/>
    </location>
</feature>
<feature type="strand" evidence="4">
    <location>
        <begin position="73"/>
        <end position="77"/>
    </location>
</feature>
<feature type="turn" evidence="4">
    <location>
        <begin position="81"/>
        <end position="83"/>
    </location>
</feature>
<feature type="helix" evidence="4">
    <location>
        <begin position="84"/>
        <end position="91"/>
    </location>
</feature>
<feature type="helix" evidence="4">
    <location>
        <begin position="93"/>
        <end position="95"/>
    </location>
</feature>
<feature type="strand" evidence="4">
    <location>
        <begin position="101"/>
        <end position="106"/>
    </location>
</feature>
<feature type="helix" evidence="4">
    <location>
        <begin position="108"/>
        <end position="111"/>
    </location>
</feature>
<feature type="strand" evidence="4">
    <location>
        <begin position="121"/>
        <end position="130"/>
    </location>
</feature>
<feature type="helix" evidence="4">
    <location>
        <begin position="132"/>
        <end position="139"/>
    </location>
</feature>
<feature type="strand" evidence="4">
    <location>
        <begin position="147"/>
        <end position="153"/>
    </location>
</feature>
<feature type="strand" evidence="4">
    <location>
        <begin position="155"/>
        <end position="157"/>
    </location>
</feature>
<feature type="helix" evidence="4">
    <location>
        <begin position="159"/>
        <end position="170"/>
    </location>
</feature>
<feature type="helix" evidence="4">
    <location>
        <begin position="172"/>
        <end position="175"/>
    </location>
</feature>
<feature type="strand" evidence="4">
    <location>
        <begin position="177"/>
        <end position="179"/>
    </location>
</feature>
<feature type="helix" evidence="4">
    <location>
        <begin position="182"/>
        <end position="195"/>
    </location>
</feature>
<feature type="turn" evidence="4">
    <location>
        <begin position="196"/>
        <end position="198"/>
    </location>
</feature>
<feature type="helix" evidence="4">
    <location>
        <begin position="199"/>
        <end position="214"/>
    </location>
</feature>
<feature type="helix" evidence="4">
    <location>
        <begin position="219"/>
        <end position="226"/>
    </location>
</feature>
<feature type="helix" evidence="4">
    <location>
        <begin position="228"/>
        <end position="248"/>
    </location>
</feature>
<feature type="helix" evidence="4">
    <location>
        <begin position="251"/>
        <end position="264"/>
    </location>
</feature>
<feature type="helix" evidence="4">
    <location>
        <begin position="267"/>
        <end position="281"/>
    </location>
</feature>
<feature type="helix" evidence="4">
    <location>
        <begin position="284"/>
        <end position="294"/>
    </location>
</feature>
<feature type="helix" evidence="4">
    <location>
        <begin position="298"/>
        <end position="308"/>
    </location>
</feature>
<feature type="helix" evidence="4">
    <location>
        <begin position="311"/>
        <end position="322"/>
    </location>
</feature>
<protein>
    <recommendedName>
        <fullName evidence="1">Ketol-acid reductoisomerase (NADP(+)) 2</fullName>
        <shortName evidence="1">KARI 2</shortName>
        <ecNumber evidence="1">1.1.1.86</ecNumber>
    </recommendedName>
    <alternativeName>
        <fullName evidence="1">Acetohydroxy-acid isomeroreductase 2</fullName>
        <shortName evidence="1">AHIR 2</shortName>
    </alternativeName>
    <alternativeName>
        <fullName evidence="1">Alpha-keto-beta-hydroxylacyl reductoisomerase 2</fullName>
    </alternativeName>
    <alternativeName>
        <fullName evidence="1">Ketol-acid reductoisomerase type 1</fullName>
    </alternativeName>
    <alternativeName>
        <fullName evidence="1">Ketol-acid reductoisomerase type I</fullName>
    </alternativeName>
</protein>
<reference key="1">
    <citation type="journal article" date="2003" name="Nature">
        <title>The genome sequence of Bacillus anthracis Ames and comparison to closely related bacteria.</title>
        <authorList>
            <person name="Read T.D."/>
            <person name="Peterson S.N."/>
            <person name="Tourasse N.J."/>
            <person name="Baillie L.W."/>
            <person name="Paulsen I.T."/>
            <person name="Nelson K.E."/>
            <person name="Tettelin H."/>
            <person name="Fouts D.E."/>
            <person name="Eisen J.A."/>
            <person name="Gill S.R."/>
            <person name="Holtzapple E.K."/>
            <person name="Okstad O.A."/>
            <person name="Helgason E."/>
            <person name="Rilstone J."/>
            <person name="Wu M."/>
            <person name="Kolonay J.F."/>
            <person name="Beanan M.J."/>
            <person name="Dodson R.J."/>
            <person name="Brinkac L.M."/>
            <person name="Gwinn M.L."/>
            <person name="DeBoy R.T."/>
            <person name="Madpu R."/>
            <person name="Daugherty S.C."/>
            <person name="Durkin A.S."/>
            <person name="Haft D.H."/>
            <person name="Nelson W.C."/>
            <person name="Peterson J.D."/>
            <person name="Pop M."/>
            <person name="Khouri H.M."/>
            <person name="Radune D."/>
            <person name="Benton J.L."/>
            <person name="Mahamoud Y."/>
            <person name="Jiang L."/>
            <person name="Hance I.R."/>
            <person name="Weidman J.F."/>
            <person name="Berry K.J."/>
            <person name="Plaut R.D."/>
            <person name="Wolf A.M."/>
            <person name="Watkins K.L."/>
            <person name="Nierman W.C."/>
            <person name="Hazen A."/>
            <person name="Cline R.T."/>
            <person name="Redmond C."/>
            <person name="Thwaite J.E."/>
            <person name="White O."/>
            <person name="Salzberg S.L."/>
            <person name="Thomason B."/>
            <person name="Friedlander A.M."/>
            <person name="Koehler T.M."/>
            <person name="Hanna P.C."/>
            <person name="Kolstoe A.-B."/>
            <person name="Fraser C.M."/>
        </authorList>
    </citation>
    <scope>NUCLEOTIDE SEQUENCE [LARGE SCALE GENOMIC DNA]</scope>
    <source>
        <strain>Ames / isolate Porton</strain>
    </source>
</reference>
<reference key="2">
    <citation type="journal article" date="2009" name="J. Bacteriol.">
        <title>The complete genome sequence of Bacillus anthracis Ames 'Ancestor'.</title>
        <authorList>
            <person name="Ravel J."/>
            <person name="Jiang L."/>
            <person name="Stanley S.T."/>
            <person name="Wilson M.R."/>
            <person name="Decker R.S."/>
            <person name="Read T.D."/>
            <person name="Worsham P."/>
            <person name="Keim P.S."/>
            <person name="Salzberg S.L."/>
            <person name="Fraser-Liggett C.M."/>
            <person name="Rasko D.A."/>
        </authorList>
    </citation>
    <scope>NUCLEOTIDE SEQUENCE [LARGE SCALE GENOMIC DNA]</scope>
    <source>
        <strain>Ames ancestor</strain>
    </source>
</reference>
<reference key="3">
    <citation type="submission" date="2004-01" db="EMBL/GenBank/DDBJ databases">
        <title>Complete genome sequence of Bacillus anthracis Sterne.</title>
        <authorList>
            <person name="Brettin T.S."/>
            <person name="Bruce D."/>
            <person name="Challacombe J.F."/>
            <person name="Gilna P."/>
            <person name="Han C."/>
            <person name="Hill K."/>
            <person name="Hitchcock P."/>
            <person name="Jackson P."/>
            <person name="Keim P."/>
            <person name="Longmire J."/>
            <person name="Lucas S."/>
            <person name="Okinaka R."/>
            <person name="Richardson P."/>
            <person name="Rubin E."/>
            <person name="Tice H."/>
        </authorList>
    </citation>
    <scope>NUCLEOTIDE SEQUENCE [LARGE SCALE GENOMIC DNA]</scope>
    <source>
        <strain>Sterne</strain>
    </source>
</reference>
<keyword id="KW-0002">3D-structure</keyword>
<keyword id="KW-0028">Amino-acid biosynthesis</keyword>
<keyword id="KW-0100">Branched-chain amino acid biosynthesis</keyword>
<keyword id="KW-0460">Magnesium</keyword>
<keyword id="KW-0479">Metal-binding</keyword>
<keyword id="KW-0521">NADP</keyword>
<keyword id="KW-0560">Oxidoreductase</keyword>
<keyword id="KW-1185">Reference proteome</keyword>
<gene>
    <name evidence="1" type="primary">ilvC2</name>
    <name type="synonym">ilvC-2</name>
    <name type="ordered locus">BA_1852</name>
    <name type="ordered locus">GBAA_1852</name>
    <name type="ordered locus">BAS1716</name>
</gene>
<accession>Q81S27</accession>
<accession>Q6I0A6</accession>
<accession>Q6KU80</accession>
<organism>
    <name type="scientific">Bacillus anthracis</name>
    <dbReference type="NCBI Taxonomy" id="1392"/>
    <lineage>
        <taxon>Bacteria</taxon>
        <taxon>Bacillati</taxon>
        <taxon>Bacillota</taxon>
        <taxon>Bacilli</taxon>
        <taxon>Bacillales</taxon>
        <taxon>Bacillaceae</taxon>
        <taxon>Bacillus</taxon>
        <taxon>Bacillus cereus group</taxon>
    </lineage>
</organism>
<comment type="function">
    <text evidence="1">Involved in the biosynthesis of branched-chain amino acids (BCAA). Catalyzes an alkyl-migration followed by a ketol-acid reduction of (S)-2-acetolactate (S2AL) to yield (R)-2,3-dihydroxy-isovalerate. In the isomerase reaction, S2AL is rearranged via a Mg-dependent methyl migration to produce 3-hydroxy-3-methyl-2-ketobutyrate (HMKB). In the reductase reaction, this 2-ketoacid undergoes a metal-dependent reduction by NADPH to yield (R)-2,3-dihydroxy-isovalerate.</text>
</comment>
<comment type="catalytic activity">
    <reaction evidence="1">
        <text>(2R)-2,3-dihydroxy-3-methylbutanoate + NADP(+) = (2S)-2-acetolactate + NADPH + H(+)</text>
        <dbReference type="Rhea" id="RHEA:22068"/>
        <dbReference type="ChEBI" id="CHEBI:15378"/>
        <dbReference type="ChEBI" id="CHEBI:49072"/>
        <dbReference type="ChEBI" id="CHEBI:57783"/>
        <dbReference type="ChEBI" id="CHEBI:58349"/>
        <dbReference type="ChEBI" id="CHEBI:58476"/>
        <dbReference type="EC" id="1.1.1.86"/>
    </reaction>
</comment>
<comment type="catalytic activity">
    <reaction evidence="1">
        <text>(2R,3R)-2,3-dihydroxy-3-methylpentanoate + NADP(+) = (S)-2-ethyl-2-hydroxy-3-oxobutanoate + NADPH + H(+)</text>
        <dbReference type="Rhea" id="RHEA:13493"/>
        <dbReference type="ChEBI" id="CHEBI:15378"/>
        <dbReference type="ChEBI" id="CHEBI:49256"/>
        <dbReference type="ChEBI" id="CHEBI:49258"/>
        <dbReference type="ChEBI" id="CHEBI:57783"/>
        <dbReference type="ChEBI" id="CHEBI:58349"/>
        <dbReference type="EC" id="1.1.1.86"/>
    </reaction>
</comment>
<comment type="cofactor">
    <cofactor evidence="1">
        <name>Mg(2+)</name>
        <dbReference type="ChEBI" id="CHEBI:18420"/>
    </cofactor>
    <text evidence="1">Binds 2 magnesium ions per subunit.</text>
</comment>
<comment type="pathway">
    <text evidence="1">Amino-acid biosynthesis; L-isoleucine biosynthesis; L-isoleucine from 2-oxobutanoate: step 2/4.</text>
</comment>
<comment type="pathway">
    <text evidence="1">Amino-acid biosynthesis; L-valine biosynthesis; L-valine from pyruvate: step 2/4.</text>
</comment>
<comment type="similarity">
    <text evidence="1">Belongs to the ketol-acid reductoisomerase family.</text>
</comment>
<proteinExistence type="evidence at protein level"/>
<dbReference type="EC" id="1.1.1.86" evidence="1"/>
<dbReference type="EMBL" id="AE016879">
    <property type="protein sequence ID" value="AAP25755.1"/>
    <property type="molecule type" value="Genomic_DNA"/>
</dbReference>
<dbReference type="EMBL" id="AE017334">
    <property type="protein sequence ID" value="AAT30967.1"/>
    <property type="molecule type" value="Genomic_DNA"/>
</dbReference>
<dbReference type="EMBL" id="AE017225">
    <property type="protein sequence ID" value="AAT54032.1"/>
    <property type="molecule type" value="Genomic_DNA"/>
</dbReference>
<dbReference type="RefSeq" id="NP_844269.1">
    <property type="nucleotide sequence ID" value="NC_003997.3"/>
</dbReference>
<dbReference type="RefSeq" id="YP_027981.1">
    <property type="nucleotide sequence ID" value="NC_005945.1"/>
</dbReference>
<dbReference type="PDB" id="8EP7">
    <property type="method" value="X-ray"/>
    <property type="resolution" value="2.20 A"/>
    <property type="chains" value="A/B/C=1-335"/>
</dbReference>
<dbReference type="PDBsum" id="8EP7"/>
<dbReference type="SMR" id="Q81S27"/>
<dbReference type="IntAct" id="Q81S27">
    <property type="interactions" value="5"/>
</dbReference>
<dbReference type="STRING" id="261594.GBAA_1852"/>
<dbReference type="DNASU" id="1086430"/>
<dbReference type="GeneID" id="45021787"/>
<dbReference type="KEGG" id="ban:BA_1852"/>
<dbReference type="KEGG" id="banh:HYU01_09300"/>
<dbReference type="KEGG" id="bar:GBAA_1852"/>
<dbReference type="KEGG" id="bat:BAS1716"/>
<dbReference type="PATRIC" id="fig|198094.11.peg.1822"/>
<dbReference type="eggNOG" id="COG0059">
    <property type="taxonomic scope" value="Bacteria"/>
</dbReference>
<dbReference type="HOGENOM" id="CLU_033821_0_1_9"/>
<dbReference type="OMA" id="LRDSEMW"/>
<dbReference type="OrthoDB" id="9804088at2"/>
<dbReference type="UniPathway" id="UPA00047">
    <property type="reaction ID" value="UER00056"/>
</dbReference>
<dbReference type="UniPathway" id="UPA00049">
    <property type="reaction ID" value="UER00060"/>
</dbReference>
<dbReference type="Proteomes" id="UP000000427">
    <property type="component" value="Chromosome"/>
</dbReference>
<dbReference type="Proteomes" id="UP000000594">
    <property type="component" value="Chromosome"/>
</dbReference>
<dbReference type="GO" id="GO:0005829">
    <property type="term" value="C:cytosol"/>
    <property type="evidence" value="ECO:0007669"/>
    <property type="project" value="TreeGrafter"/>
</dbReference>
<dbReference type="GO" id="GO:0004455">
    <property type="term" value="F:ketol-acid reductoisomerase activity"/>
    <property type="evidence" value="ECO:0007669"/>
    <property type="project" value="UniProtKB-UniRule"/>
</dbReference>
<dbReference type="GO" id="GO:0000287">
    <property type="term" value="F:magnesium ion binding"/>
    <property type="evidence" value="ECO:0007669"/>
    <property type="project" value="UniProtKB-UniRule"/>
</dbReference>
<dbReference type="GO" id="GO:0050661">
    <property type="term" value="F:NADP binding"/>
    <property type="evidence" value="ECO:0007669"/>
    <property type="project" value="InterPro"/>
</dbReference>
<dbReference type="GO" id="GO:0009097">
    <property type="term" value="P:isoleucine biosynthetic process"/>
    <property type="evidence" value="ECO:0007669"/>
    <property type="project" value="UniProtKB-UniRule"/>
</dbReference>
<dbReference type="GO" id="GO:0009099">
    <property type="term" value="P:L-valine biosynthetic process"/>
    <property type="evidence" value="ECO:0007669"/>
    <property type="project" value="UniProtKB-UniRule"/>
</dbReference>
<dbReference type="FunFam" id="3.40.50.720:FF:000023">
    <property type="entry name" value="Ketol-acid reductoisomerase (NADP(+))"/>
    <property type="match status" value="1"/>
</dbReference>
<dbReference type="Gene3D" id="6.10.240.10">
    <property type="match status" value="1"/>
</dbReference>
<dbReference type="Gene3D" id="3.40.50.720">
    <property type="entry name" value="NAD(P)-binding Rossmann-like Domain"/>
    <property type="match status" value="1"/>
</dbReference>
<dbReference type="HAMAP" id="MF_00435">
    <property type="entry name" value="IlvC"/>
    <property type="match status" value="1"/>
</dbReference>
<dbReference type="InterPro" id="IPR008927">
    <property type="entry name" value="6-PGluconate_DH-like_C_sf"/>
</dbReference>
<dbReference type="InterPro" id="IPR013023">
    <property type="entry name" value="KARI"/>
</dbReference>
<dbReference type="InterPro" id="IPR000506">
    <property type="entry name" value="KARI_C"/>
</dbReference>
<dbReference type="InterPro" id="IPR013116">
    <property type="entry name" value="KARI_N"/>
</dbReference>
<dbReference type="InterPro" id="IPR014359">
    <property type="entry name" value="KARI_prok"/>
</dbReference>
<dbReference type="InterPro" id="IPR036291">
    <property type="entry name" value="NAD(P)-bd_dom_sf"/>
</dbReference>
<dbReference type="NCBIfam" id="TIGR00465">
    <property type="entry name" value="ilvC"/>
    <property type="match status" value="1"/>
</dbReference>
<dbReference type="NCBIfam" id="NF004017">
    <property type="entry name" value="PRK05479.1"/>
    <property type="match status" value="1"/>
</dbReference>
<dbReference type="NCBIfam" id="NF009940">
    <property type="entry name" value="PRK13403.1"/>
    <property type="match status" value="1"/>
</dbReference>
<dbReference type="PANTHER" id="PTHR21371">
    <property type="entry name" value="KETOL-ACID REDUCTOISOMERASE, MITOCHONDRIAL"/>
    <property type="match status" value="1"/>
</dbReference>
<dbReference type="PANTHER" id="PTHR21371:SF1">
    <property type="entry name" value="KETOL-ACID REDUCTOISOMERASE, MITOCHONDRIAL"/>
    <property type="match status" value="1"/>
</dbReference>
<dbReference type="Pfam" id="PF01450">
    <property type="entry name" value="KARI_C"/>
    <property type="match status" value="1"/>
</dbReference>
<dbReference type="Pfam" id="PF07991">
    <property type="entry name" value="KARI_N"/>
    <property type="match status" value="1"/>
</dbReference>
<dbReference type="PIRSF" id="PIRSF000116">
    <property type="entry name" value="IlvC_gammaproteo"/>
    <property type="match status" value="1"/>
</dbReference>
<dbReference type="SUPFAM" id="SSF48179">
    <property type="entry name" value="6-phosphogluconate dehydrogenase C-terminal domain-like"/>
    <property type="match status" value="1"/>
</dbReference>
<dbReference type="SUPFAM" id="SSF51735">
    <property type="entry name" value="NAD(P)-binding Rossmann-fold domains"/>
    <property type="match status" value="1"/>
</dbReference>
<dbReference type="PROSITE" id="PS51851">
    <property type="entry name" value="KARI_C"/>
    <property type="match status" value="1"/>
</dbReference>
<dbReference type="PROSITE" id="PS51850">
    <property type="entry name" value="KARI_N"/>
    <property type="match status" value="1"/>
</dbReference>
<evidence type="ECO:0000255" key="1">
    <source>
        <dbReference type="HAMAP-Rule" id="MF_00435"/>
    </source>
</evidence>
<evidence type="ECO:0000255" key="2">
    <source>
        <dbReference type="PROSITE-ProRule" id="PRU01197"/>
    </source>
</evidence>
<evidence type="ECO:0000255" key="3">
    <source>
        <dbReference type="PROSITE-ProRule" id="PRU01198"/>
    </source>
</evidence>
<evidence type="ECO:0007829" key="4">
    <source>
        <dbReference type="PDB" id="8EP7"/>
    </source>
</evidence>
<sequence length="335" mass="36918">MKTYYEQDANVGLLQGKTVAVIGYGSQGHAQAQNLRDSGVEVVVGVRPGKSFEVAKADGFEVMSVSEAVRTAQVVQMLLPDEQQAHVYKAEVEENLREGQMLLFSHGFNIHFGQINPPSYVDVAMVAPKSPGHLVRRVFQEGNGVPALVAVHQDATGTALHVALAYAKGVGCTRAGVIETTFQEETETDLFGEQAVLCGGVTALVKAGFETLTEGGYRPEIAYFECLHELKLIVDLMYEGGLTNMRHSISDTAEFGDYVTGSRIVTDETKKEMKRVLTEIQQGEFAKKWILENQAGRPTYNAMKKAEQNHQLEKVGEELREMMSWIHAPKELVKK</sequence>
<name>ILVC2_BACAN</name>